<keyword id="KW-0002">3D-structure</keyword>
<keyword id="KW-0007">Acetylation</keyword>
<keyword id="KW-0963">Cytoplasm</keyword>
<keyword id="KW-0396">Initiation factor</keyword>
<keyword id="KW-0496">Mitochondrion</keyword>
<keyword id="KW-0597">Phosphoprotein</keyword>
<keyword id="KW-0648">Protein biosynthesis</keyword>
<keyword id="KW-1267">Proteomics identification</keyword>
<keyword id="KW-1185">Reference proteome</keyword>
<keyword id="KW-0694">RNA-binding</keyword>
<keyword id="KW-0810">Translation regulation</keyword>
<reference key="1">
    <citation type="journal article" date="1987" name="J. Biol. Chem.">
        <title>Cloning and sequencing of complementary DNAs encoding the alpha-subunit of translational initiation factor eIF-2. Characterization of the protein and its messenger RNA.</title>
        <authorList>
            <person name="Ernst H."/>
            <person name="Duncan R.F."/>
            <person name="Hershey J.W.B."/>
        </authorList>
    </citation>
    <scope>NUCLEOTIDE SEQUENCE [MRNA]</scope>
    <source>
        <tissue>Fibroblast</tissue>
    </source>
</reference>
<reference key="2">
    <citation type="journal article" date="2004" name="Genome Res.">
        <title>The status, quality, and expansion of the NIH full-length cDNA project: the Mammalian Gene Collection (MGC).</title>
        <authorList>
            <consortium name="The MGC Project Team"/>
        </authorList>
    </citation>
    <scope>NUCLEOTIDE SEQUENCE [LARGE SCALE MRNA]</scope>
    <source>
        <tissue>Placenta</tissue>
    </source>
</reference>
<reference key="3">
    <citation type="journal article" date="1999" name="J. Biol. Chem.">
        <title>Characterization of a mutant pancreatic eIF-2alpha kinase, PEK, and co-localization with somatostatin in islet delta cells.</title>
        <authorList>
            <person name="Shi Y."/>
            <person name="An J."/>
            <person name="Liang J."/>
            <person name="Hayes S.E."/>
            <person name="Sandusky G.E."/>
            <person name="Stramm L.E."/>
            <person name="Yang N.N."/>
        </authorList>
    </citation>
    <scope>PHOSPHORYLATION</scope>
</reference>
<reference key="4">
    <citation type="journal article" date="2004" name="Virology">
        <title>Inhibition of PKR by vaccinia virus: role of the N- and C-terminal domains of E3L.</title>
        <authorList>
            <person name="Langland J.O."/>
            <person name="Jacobs B.L."/>
        </authorList>
    </citation>
    <scope>PHOSPHORYLATION STATE REGULATION BY VACCINIA VIRUS PROTEIN E3</scope>
    <scope>ACTIVITY REGULATION</scope>
</reference>
<reference key="5">
    <citation type="journal article" date="2006" name="Protein Expr. Purif.">
        <title>An efficient mammalian cell-free translation system supplemented with translation factors.</title>
        <authorList>
            <person name="Mikami S."/>
            <person name="Masutani M."/>
            <person name="Sonenberg N."/>
            <person name="Yokoyama S."/>
            <person name="Imataka H."/>
        </authorList>
    </citation>
    <scope>FUNCTION</scope>
</reference>
<reference key="6">
    <citation type="journal article" date="2008" name="Biochem. J.">
        <title>The N-terminal region of ABC50 interacts with eukaryotic initiation factor eIF2 and is a target for regulatory phosphorylation by CK2.</title>
        <authorList>
            <person name="Paytubi S."/>
            <person name="Morrice N.A."/>
            <person name="Boudeau J."/>
            <person name="Proud C.G."/>
        </authorList>
    </citation>
    <scope>INTERACTION WITH ABCF1</scope>
    <scope>ASSOCIATION WITH RIBOSOMES</scope>
</reference>
<reference key="7">
    <citation type="journal article" date="2008" name="J. Virol.">
        <title>Rotavirus infection induces the phosphorylation of eIF2alpha but prevents the formation of stress granules.</title>
        <authorList>
            <person name="Montero H."/>
            <person name="Rojas M."/>
            <person name="Arias C.F."/>
            <person name="Lopez S."/>
        </authorList>
    </citation>
    <scope>PHOSPHORYLATION STATE REGULATION BY ROTAVIRUS A</scope>
    <scope>ACTIVITY REGULATION</scope>
</reference>
<reference key="8">
    <citation type="journal article" date="2008" name="Mol. Biol. Cell">
        <title>The DEAD-box RNA helicase DDX3 associates with export messenger ribonucleoproteins as well as tip-associated protein and participates in translational control.</title>
        <authorList>
            <person name="Lai M.C."/>
            <person name="Lee Y.H."/>
            <person name="Tarn W.Y."/>
        </authorList>
    </citation>
    <scope>INTERACTION WITH DDX3X</scope>
</reference>
<reference key="9">
    <citation type="journal article" date="2009" name="J. Biol. Chem.">
        <title>An upstream open reading frame regulates translation of GADD34 during cellular stresses that induce eIF2alpha phosphorylation.</title>
        <authorList>
            <person name="Lee Y.Y."/>
            <person name="Cevallos R.C."/>
            <person name="Jan E."/>
        </authorList>
    </citation>
    <scope>PHOSPHORYLATION</scope>
    <scope>ACTIVITY REGULATION</scope>
    <scope>FUNCTION</scope>
</reference>
<reference key="10">
    <citation type="journal article" date="2009" name="Sci. Signal.">
        <title>Quantitative phosphoproteomic analysis of T cell receptor signaling reveals system-wide modulation of protein-protein interactions.</title>
        <authorList>
            <person name="Mayya V."/>
            <person name="Lundgren D.H."/>
            <person name="Hwang S.-I."/>
            <person name="Rezaul K."/>
            <person name="Wu L."/>
            <person name="Eng J.K."/>
            <person name="Rodionov V."/>
            <person name="Han D.K."/>
        </authorList>
    </citation>
    <scope>PHOSPHORYLATION [LARGE SCALE ANALYSIS] AT SER-52</scope>
    <scope>IDENTIFICATION BY MASS SPECTROMETRY [LARGE SCALE ANALYSIS]</scope>
    <source>
        <tissue>Leukemic T-cell</tissue>
    </source>
</reference>
<reference key="11">
    <citation type="journal article" date="2009" name="Science">
        <title>Lysine acetylation targets protein complexes and co-regulates major cellular functions.</title>
        <authorList>
            <person name="Choudhary C."/>
            <person name="Kumar C."/>
            <person name="Gnad F."/>
            <person name="Nielsen M.L."/>
            <person name="Rehman M."/>
            <person name="Walther T.C."/>
            <person name="Olsen J.V."/>
            <person name="Mann M."/>
        </authorList>
    </citation>
    <scope>ACETYLATION [LARGE SCALE ANALYSIS] AT LYS-141</scope>
    <scope>IDENTIFICATION BY MASS SPECTROMETRY [LARGE SCALE ANALYSIS]</scope>
</reference>
<reference key="12">
    <citation type="journal article" date="2011" name="BMC Syst. Biol.">
        <title>Initial characterization of the human central proteome.</title>
        <authorList>
            <person name="Burkard T.R."/>
            <person name="Planyavsky M."/>
            <person name="Kaupe I."/>
            <person name="Breitwieser F.P."/>
            <person name="Buerckstuemmer T."/>
            <person name="Bennett K.L."/>
            <person name="Superti-Furga G."/>
            <person name="Colinge J."/>
        </authorList>
    </citation>
    <scope>IDENTIFICATION BY MASS SPECTROMETRY [LARGE SCALE ANALYSIS]</scope>
</reference>
<reference key="13">
    <citation type="journal article" date="2012" name="Mol. Cell">
        <title>eIF2gamma mutation that disrupts eIF2 complex integrity links intellectual disability to impaired translation initiation.</title>
        <authorList>
            <person name="Borck G."/>
            <person name="Shin B.S."/>
            <person name="Stiller B."/>
            <person name="Mimouni-Bloch A."/>
            <person name="Thiele H."/>
            <person name="Kim J.R."/>
            <person name="Thakur M."/>
            <person name="Skinner C."/>
            <person name="Aschenbach L."/>
            <person name="Smirin-Yosef P."/>
            <person name="Har-Zahav A."/>
            <person name="Nuernberg G."/>
            <person name="Altmueller J."/>
            <person name="Frommolt P."/>
            <person name="Hofmann K."/>
            <person name="Konen O."/>
            <person name="Nuernberg P."/>
            <person name="Munnich A."/>
            <person name="Schwartz C.E."/>
            <person name="Gothelf D."/>
            <person name="Colleaux L."/>
            <person name="Dever T.E."/>
            <person name="Kubisch C."/>
            <person name="Basel-Vanagaite L."/>
        </authorList>
    </citation>
    <scope>SUBUNIT</scope>
</reference>
<reference key="14">
    <citation type="journal article" date="2013" name="J. Proteome Res.">
        <title>Toward a comprehensive characterization of a human cancer cell phosphoproteome.</title>
        <authorList>
            <person name="Zhou H."/>
            <person name="Di Palma S."/>
            <person name="Preisinger C."/>
            <person name="Peng M."/>
            <person name="Polat A.N."/>
            <person name="Heck A.J."/>
            <person name="Mohammed S."/>
        </authorList>
    </citation>
    <scope>PHOSPHORYLATION [LARGE SCALE ANALYSIS] AT SER-158; THR-279 AND THR-281</scope>
    <scope>IDENTIFICATION BY MASS SPECTROMETRY [LARGE SCALE ANALYSIS]</scope>
    <source>
        <tissue>Cervix carcinoma</tissue>
        <tissue>Erythroleukemia</tissue>
    </source>
</reference>
<reference key="15">
    <citation type="journal article" date="2014" name="J. Proteomics">
        <title>An enzyme assisted RP-RPLC approach for in-depth analysis of human liver phosphoproteome.</title>
        <authorList>
            <person name="Bian Y."/>
            <person name="Song C."/>
            <person name="Cheng K."/>
            <person name="Dong M."/>
            <person name="Wang F."/>
            <person name="Huang J."/>
            <person name="Sun D."/>
            <person name="Wang L."/>
            <person name="Ye M."/>
            <person name="Zou H."/>
        </authorList>
    </citation>
    <scope>PHOSPHORYLATION [LARGE SCALE ANALYSIS] AT SER-52</scope>
    <scope>IDENTIFICATION BY MASS SPECTROMETRY [LARGE SCALE ANALYSIS]</scope>
    <source>
        <tissue>Liver</tissue>
    </source>
</reference>
<reference key="16">
    <citation type="journal article" date="2015" name="Proteomics">
        <title>N-terminome analysis of the human mitochondrial proteome.</title>
        <authorList>
            <person name="Vaca Jacome A.S."/>
            <person name="Rabilloud T."/>
            <person name="Schaeffer-Reiss C."/>
            <person name="Rompais M."/>
            <person name="Ayoub D."/>
            <person name="Lane L."/>
            <person name="Bairoch A."/>
            <person name="Van Dorsselaer A."/>
            <person name="Carapito C."/>
        </authorList>
    </citation>
    <scope>IDENTIFICATION BY MASS SPECTROMETRY [LARGE SCALE ANALYSIS]</scope>
</reference>
<reference key="17">
    <citation type="journal article" date="2018" name="J. Virol.">
        <title>Rotavirus Induces Formation of Remodeled Stress Granules and P Bodies and Their Sequestration in Viroplasms To Promote Progeny Virus Production.</title>
        <authorList>
            <person name="Dhillon P."/>
            <person name="Rao C.D."/>
        </authorList>
    </citation>
    <scope>INTERACTION WITH ROTAVIRUS A NON-STRUCTURAL PROTEIN 2 (MICROBIAL INFECTION)</scope>
    <scope>INTERACTION WITH ROTAVIRUS A NON-STRUCTURAL PROTEIN 5 (MICROBIAL INFECTION)</scope>
</reference>
<reference key="18">
    <citation type="journal article" date="2020" name="Mol. Cell">
        <title>Suppression of MEHMO Syndrome Mutation in eIF2 by Small Molecule ISRIB.</title>
        <authorList>
            <person name="Young-Baird S.K."/>
            <person name="Lourenco M.B."/>
            <person name="Elder M.K."/>
            <person name="Klann E."/>
            <person name="Liebau S."/>
            <person name="Dever T.E."/>
        </authorList>
    </citation>
    <scope>IDENTIFICATION IN THE EIF2 COMPLEX</scope>
    <scope>INTERACTION WITH CDC123</scope>
</reference>
<reference key="19">
    <citation type="journal article" date="2021" name="Science">
        <title>QRICH1 dictates the outcome of ER stress through transcriptional control of proteostasis.</title>
        <authorList>
            <person name="You K."/>
            <person name="Wang L."/>
            <person name="Chou C.H."/>
            <person name="Liu K."/>
            <person name="Nakata T."/>
            <person name="Jaiswal A."/>
            <person name="Yao J."/>
            <person name="Lefkovith A."/>
            <person name="Omar A."/>
            <person name="Perrigoue J.G."/>
            <person name="Towne J.E."/>
            <person name="Regev A."/>
            <person name="Graham D.B."/>
            <person name="Xavier R.J."/>
        </authorList>
    </citation>
    <scope>FUNCTION</scope>
    <scope>INDUCTION BY ER STRESS</scope>
</reference>
<reference key="20">
    <citation type="journal article" date="2022" name="J. Biol. Chem.">
        <title>Stepwise assembly of the eukaryotic translation initiation factor 2 complex.</title>
        <authorList>
            <person name="Vanselow S."/>
            <person name="Neumann-Arnold L."/>
            <person name="Wojciech-Moock F."/>
            <person name="Seufert W."/>
        </authorList>
    </citation>
    <scope>IDENTIFICATION IN THE EIF2 COMPLEX</scope>
    <scope>INTERACTION WITH CDC123</scope>
</reference>
<reference key="21">
    <citation type="journal article" date="2024" name="Mol. Cell">
        <title>The HRI branch of the integrated stress response selectively triggers mitophagy.</title>
        <authorList>
            <person name="Chakrabarty Y."/>
            <person name="Yang Z."/>
            <person name="Chen H."/>
            <person name="Chan D.C."/>
        </authorList>
    </citation>
    <scope>FUNCTION</scope>
    <scope>SUBCELLULAR LOCATION</scope>
    <scope>PHOSPHORYLATION AT SER-52</scope>
    <scope>MUTAGENESIS OF SER-52</scope>
</reference>
<reference key="22">
    <citation type="journal article" date="2002" name="J. Biol. Chem.">
        <title>Crystal structure of the N-terminal segment of human eukaryotic translation initiation factor 2alpha.</title>
        <authorList>
            <person name="Nonato M.C."/>
            <person name="Widom J."/>
            <person name="Clardy J."/>
        </authorList>
    </citation>
    <scope>X-RAY CRYSTALLOGRAPHY (1.9 ANGSTROMS) OF 1-183</scope>
</reference>
<reference key="23">
    <citation type="journal article" date="2004" name="Structure">
        <title>Solution structure of human initiation factor eIF2alpha reveals homology to the elongation factor eEF1B.</title>
        <authorList>
            <person name="Ito T."/>
            <person name="Marintchev A."/>
            <person name="Wagner G."/>
        </authorList>
    </citation>
    <scope>STRUCTURE BY NMR OF 5-303</scope>
</reference>
<reference evidence="23 24" key="24">
    <citation type="journal article" date="2019" name="Science">
        <title>Structural basis for eIF2B inhibition in integrated stress response.</title>
        <authorList>
            <person name="Kashiwagi K."/>
            <person name="Yokoyama T."/>
            <person name="Nishimoto M."/>
            <person name="Takahashi M."/>
            <person name="Sakamoto A."/>
            <person name="Yonemochi M."/>
            <person name="Shirouzu M."/>
            <person name="Ito T."/>
        </authorList>
    </citation>
    <scope>STRUCTURE BY ELECTRON MICROSCOPY (4.30 ANGSTROMS) IN COMPLEX WITH THE EIF2B COMPLEX</scope>
    <scope>IDENTIFICATION IN THE EIF2 COMPLEX</scope>
    <scope>PHOSPHORYLATION</scope>
</reference>
<feature type="chain" id="PRO_0000137382" description="Eukaryotic translation initiation factor 2 subunit 1">
    <location>
        <begin position="1"/>
        <end position="315"/>
    </location>
</feature>
<feature type="domain" description="S1 motif" evidence="5">
    <location>
        <begin position="17"/>
        <end position="88"/>
    </location>
</feature>
<feature type="region of interest" description="Disordered" evidence="6">
    <location>
        <begin position="293"/>
        <end position="315"/>
    </location>
</feature>
<feature type="compositionally biased region" description="Acidic residues" evidence="6">
    <location>
        <begin position="299"/>
        <end position="308"/>
    </location>
</feature>
<feature type="modified residue" description="Phosphoserine; by HRI" evidence="3">
    <location>
        <position position="49"/>
    </location>
</feature>
<feature type="modified residue" description="Phosphoserine" evidence="20 26 28">
    <location>
        <position position="52"/>
    </location>
</feature>
<feature type="modified residue" description="N6-acetyllysine" evidence="25">
    <location>
        <position position="141"/>
    </location>
</feature>
<feature type="modified residue" description="Phosphoserine" evidence="27">
    <location>
        <position position="158"/>
    </location>
</feature>
<feature type="modified residue" description="Phosphothreonine" evidence="27">
    <location>
        <position position="279"/>
    </location>
</feature>
<feature type="modified residue" description="Phosphothreonine" evidence="27">
    <location>
        <position position="281"/>
    </location>
</feature>
<feature type="mutagenesis site" description="Abolished phosphorylation by EIF2AK1/HRI in response to stress. Abolished relocalization to the mitochondrial surface in response to mitochondrial damage." evidence="20">
    <original>S</original>
    <variation>A</variation>
    <location>
        <position position="52"/>
    </location>
</feature>
<feature type="mutagenesis site" description="Mimics phosphorylation; promotes relocalization to the mitochondrial surface in response to mitochondrial damage." evidence="20">
    <original>S</original>
    <variation>D</variation>
    <location>
        <position position="52"/>
    </location>
</feature>
<feature type="strand" evidence="29">
    <location>
        <begin position="8"/>
        <end position="13"/>
    </location>
</feature>
<feature type="strand" evidence="29">
    <location>
        <begin position="19"/>
        <end position="27"/>
    </location>
</feature>
<feature type="strand" evidence="29">
    <location>
        <begin position="29"/>
        <end position="36"/>
    </location>
</feature>
<feature type="turn" evidence="29">
    <location>
        <begin position="37"/>
        <end position="41"/>
    </location>
</feature>
<feature type="strand" evidence="29">
    <location>
        <begin position="43"/>
        <end position="47"/>
    </location>
</feature>
<feature type="helix" evidence="29">
    <location>
        <begin position="48"/>
        <end position="50"/>
    </location>
</feature>
<feature type="turn" evidence="31">
    <location>
        <begin position="55"/>
        <end position="57"/>
    </location>
</feature>
<feature type="helix" evidence="32">
    <location>
        <begin position="59"/>
        <end position="61"/>
    </location>
</feature>
<feature type="strand" evidence="30">
    <location>
        <begin position="64"/>
        <end position="66"/>
    </location>
</feature>
<feature type="strand" evidence="29">
    <location>
        <begin position="68"/>
        <end position="77"/>
    </location>
</feature>
<feature type="turn" evidence="29">
    <location>
        <begin position="78"/>
        <end position="81"/>
    </location>
</feature>
<feature type="strand" evidence="29">
    <location>
        <begin position="82"/>
        <end position="87"/>
    </location>
</feature>
<feature type="helix" evidence="29">
    <location>
        <begin position="92"/>
        <end position="118"/>
    </location>
</feature>
<feature type="helix" evidence="29">
    <location>
        <begin position="124"/>
        <end position="133"/>
    </location>
</feature>
<feature type="helix" evidence="29">
    <location>
        <begin position="135"/>
        <end position="142"/>
    </location>
</feature>
<feature type="helix" evidence="29">
    <location>
        <begin position="147"/>
        <end position="158"/>
    </location>
</feature>
<feature type="helix" evidence="29">
    <location>
        <begin position="160"/>
        <end position="163"/>
    </location>
</feature>
<feature type="helix" evidence="29">
    <location>
        <begin position="170"/>
        <end position="182"/>
    </location>
</feature>
<feature type="strand" evidence="32">
    <location>
        <begin position="190"/>
        <end position="198"/>
    </location>
</feature>
<feature type="strand" evidence="32">
    <location>
        <begin position="201"/>
        <end position="203"/>
    </location>
</feature>
<feature type="helix" evidence="32">
    <location>
        <begin position="204"/>
        <end position="217"/>
    </location>
</feature>
<feature type="strand" evidence="30">
    <location>
        <begin position="218"/>
        <end position="220"/>
    </location>
</feature>
<feature type="strand" evidence="32">
    <location>
        <begin position="226"/>
        <end position="231"/>
    </location>
</feature>
<feature type="strand" evidence="32">
    <location>
        <begin position="234"/>
        <end position="240"/>
    </location>
</feature>
<feature type="helix" evidence="32">
    <location>
        <begin position="244"/>
        <end position="264"/>
    </location>
</feature>
<feature type="strand" evidence="32">
    <location>
        <begin position="268"/>
        <end position="277"/>
    </location>
</feature>
<feature type="helix" evidence="33">
    <location>
        <begin position="280"/>
        <end position="295"/>
    </location>
</feature>
<evidence type="ECO:0000250" key="1">
    <source>
        <dbReference type="UniProtKB" id="P56286"/>
    </source>
</evidence>
<evidence type="ECO:0000250" key="2">
    <source>
        <dbReference type="UniProtKB" id="P68101"/>
    </source>
</evidence>
<evidence type="ECO:0000250" key="3">
    <source>
        <dbReference type="UniProtKB" id="P83268"/>
    </source>
</evidence>
<evidence type="ECO:0000250" key="4">
    <source>
        <dbReference type="UniProtKB" id="Q6ZWX6"/>
    </source>
</evidence>
<evidence type="ECO:0000255" key="5">
    <source>
        <dbReference type="PROSITE-ProRule" id="PRU00180"/>
    </source>
</evidence>
<evidence type="ECO:0000256" key="6">
    <source>
        <dbReference type="SAM" id="MobiDB-lite"/>
    </source>
</evidence>
<evidence type="ECO:0000269" key="7">
    <source>
    </source>
</evidence>
<evidence type="ECO:0000269" key="8">
    <source>
    </source>
</evidence>
<evidence type="ECO:0000269" key="9">
    <source>
    </source>
</evidence>
<evidence type="ECO:0000269" key="10">
    <source>
    </source>
</evidence>
<evidence type="ECO:0000269" key="11">
    <source>
    </source>
</evidence>
<evidence type="ECO:0000269" key="12">
    <source>
    </source>
</evidence>
<evidence type="ECO:0000269" key="13">
    <source>
    </source>
</evidence>
<evidence type="ECO:0000269" key="14">
    <source>
    </source>
</evidence>
<evidence type="ECO:0000269" key="15">
    <source>
    </source>
</evidence>
<evidence type="ECO:0000269" key="16">
    <source>
    </source>
</evidence>
<evidence type="ECO:0000269" key="17">
    <source>
    </source>
</evidence>
<evidence type="ECO:0000269" key="18">
    <source>
    </source>
</evidence>
<evidence type="ECO:0000269" key="19">
    <source>
    </source>
</evidence>
<evidence type="ECO:0000269" key="20">
    <source>
    </source>
</evidence>
<evidence type="ECO:0000305" key="21"/>
<evidence type="ECO:0000312" key="22">
    <source>
        <dbReference type="HGNC" id="HGNC:3265"/>
    </source>
</evidence>
<evidence type="ECO:0007744" key="23">
    <source>
        <dbReference type="PDB" id="6K71"/>
    </source>
</evidence>
<evidence type="ECO:0007744" key="24">
    <source>
        <dbReference type="PDB" id="6K72"/>
    </source>
</evidence>
<evidence type="ECO:0007744" key="25">
    <source>
    </source>
</evidence>
<evidence type="ECO:0007744" key="26">
    <source>
    </source>
</evidence>
<evidence type="ECO:0007744" key="27">
    <source>
    </source>
</evidence>
<evidence type="ECO:0007744" key="28">
    <source>
    </source>
</evidence>
<evidence type="ECO:0007829" key="29">
    <source>
        <dbReference type="PDB" id="1KL9"/>
    </source>
</evidence>
<evidence type="ECO:0007829" key="30">
    <source>
        <dbReference type="PDB" id="1Q8K"/>
    </source>
</evidence>
<evidence type="ECO:0007829" key="31">
    <source>
        <dbReference type="PDB" id="6O9Z"/>
    </source>
</evidence>
<evidence type="ECO:0007829" key="32">
    <source>
        <dbReference type="PDB" id="7F66"/>
    </source>
</evidence>
<evidence type="ECO:0007829" key="33">
    <source>
        <dbReference type="PDB" id="8QZZ"/>
    </source>
</evidence>
<dbReference type="EMBL" id="J02645">
    <property type="protein sequence ID" value="AAA52373.1"/>
    <property type="molecule type" value="mRNA"/>
</dbReference>
<dbReference type="EMBL" id="BC002513">
    <property type="protein sequence ID" value="AAH02513.1"/>
    <property type="molecule type" value="mRNA"/>
</dbReference>
<dbReference type="CCDS" id="CCDS9781.1"/>
<dbReference type="RefSeq" id="NP_004085.1">
    <property type="nucleotide sequence ID" value="NM_004094.5"/>
</dbReference>
<dbReference type="PDB" id="1KL9">
    <property type="method" value="X-ray"/>
    <property type="resolution" value="1.90 A"/>
    <property type="chains" value="A=2-183"/>
</dbReference>
<dbReference type="PDB" id="1Q8K">
    <property type="method" value="NMR"/>
    <property type="chains" value="A=5-303"/>
</dbReference>
<dbReference type="PDB" id="6K71">
    <property type="method" value="EM"/>
    <property type="resolution" value="4.30 A"/>
    <property type="chains" value="K=1-315"/>
</dbReference>
<dbReference type="PDB" id="6K72">
    <property type="method" value="EM"/>
    <property type="resolution" value="4.60 A"/>
    <property type="chains" value="K/L=1-315"/>
</dbReference>
<dbReference type="PDB" id="6O81">
    <property type="method" value="EM"/>
    <property type="resolution" value="3.21 A"/>
    <property type="chains" value="L/M=1-315"/>
</dbReference>
<dbReference type="PDB" id="6O85">
    <property type="method" value="EM"/>
    <property type="resolution" value="3.03 A"/>
    <property type="chains" value="L=2-315"/>
</dbReference>
<dbReference type="PDB" id="6O9Z">
    <property type="method" value="EM"/>
    <property type="resolution" value="3.03 A"/>
    <property type="chains" value="L/M=2-315"/>
</dbReference>
<dbReference type="PDB" id="6YBV">
    <property type="method" value="EM"/>
    <property type="resolution" value="3.80 A"/>
    <property type="chains" value="r=1-315"/>
</dbReference>
<dbReference type="PDB" id="6ZMW">
    <property type="method" value="EM"/>
    <property type="resolution" value="3.70 A"/>
    <property type="chains" value="r=1-315"/>
</dbReference>
<dbReference type="PDB" id="6ZP4">
    <property type="method" value="EM"/>
    <property type="resolution" value="2.90 A"/>
    <property type="chains" value="O=1-315"/>
</dbReference>
<dbReference type="PDB" id="7A09">
    <property type="method" value="EM"/>
    <property type="resolution" value="3.50 A"/>
    <property type="chains" value="O=1-315"/>
</dbReference>
<dbReference type="PDB" id="7D43">
    <property type="method" value="EM"/>
    <property type="resolution" value="4.30 A"/>
    <property type="chains" value="K/L=1-315"/>
</dbReference>
<dbReference type="PDB" id="7D44">
    <property type="method" value="EM"/>
    <property type="resolution" value="4.00 A"/>
    <property type="chains" value="K/L=1-315"/>
</dbReference>
<dbReference type="PDB" id="7D45">
    <property type="method" value="EM"/>
    <property type="resolution" value="3.80 A"/>
    <property type="chains" value="K=1-315"/>
</dbReference>
<dbReference type="PDB" id="7F66">
    <property type="method" value="EM"/>
    <property type="resolution" value="2.76 A"/>
    <property type="chains" value="N=1-315"/>
</dbReference>
<dbReference type="PDB" id="7F67">
    <property type="method" value="EM"/>
    <property type="resolution" value="3.59 A"/>
    <property type="chains" value="N/Q=1-315"/>
</dbReference>
<dbReference type="PDB" id="7NZM">
    <property type="method" value="EM"/>
    <property type="resolution" value="3.96 A"/>
    <property type="chains" value="E=2-187"/>
</dbReference>
<dbReference type="PDB" id="7QP6">
    <property type="method" value="EM"/>
    <property type="resolution" value="4.70 A"/>
    <property type="chains" value="r=1-315"/>
</dbReference>
<dbReference type="PDB" id="7QP7">
    <property type="method" value="EM"/>
    <property type="resolution" value="3.70 A"/>
    <property type="chains" value="r=1-315"/>
</dbReference>
<dbReference type="PDB" id="7SYR">
    <property type="method" value="EM"/>
    <property type="resolution" value="3.60 A"/>
    <property type="chains" value="j=1-315"/>
</dbReference>
<dbReference type="PDB" id="7SYS">
    <property type="method" value="EM"/>
    <property type="resolution" value="3.50 A"/>
    <property type="chains" value="j=1-315"/>
</dbReference>
<dbReference type="PDB" id="8OZ0">
    <property type="method" value="EM"/>
    <property type="resolution" value="3.50 A"/>
    <property type="chains" value="D=1-315"/>
</dbReference>
<dbReference type="PDB" id="8PJ1">
    <property type="method" value="EM"/>
    <property type="resolution" value="3.40 A"/>
    <property type="chains" value="r=1-315"/>
</dbReference>
<dbReference type="PDB" id="8PJ2">
    <property type="method" value="EM"/>
    <property type="resolution" value="3.40 A"/>
    <property type="chains" value="r=1-315"/>
</dbReference>
<dbReference type="PDB" id="8PJ3">
    <property type="method" value="EM"/>
    <property type="resolution" value="3.70 A"/>
    <property type="chains" value="r=1-315"/>
</dbReference>
<dbReference type="PDB" id="8PJ4">
    <property type="method" value="EM"/>
    <property type="resolution" value="3.20 A"/>
    <property type="chains" value="r=1-315"/>
</dbReference>
<dbReference type="PDB" id="8PPL">
    <property type="method" value="EM"/>
    <property type="resolution" value="2.65 A"/>
    <property type="chains" value="Ir=1-315"/>
</dbReference>
<dbReference type="PDB" id="8QZZ">
    <property type="method" value="X-ray"/>
    <property type="resolution" value="3.35 A"/>
    <property type="chains" value="B=1-315"/>
</dbReference>
<dbReference type="PDBsum" id="1KL9"/>
<dbReference type="PDBsum" id="1Q8K"/>
<dbReference type="PDBsum" id="6K71"/>
<dbReference type="PDBsum" id="6K72"/>
<dbReference type="PDBsum" id="6O81"/>
<dbReference type="PDBsum" id="6O85"/>
<dbReference type="PDBsum" id="6O9Z"/>
<dbReference type="PDBsum" id="6YBV"/>
<dbReference type="PDBsum" id="6ZMW"/>
<dbReference type="PDBsum" id="6ZP4"/>
<dbReference type="PDBsum" id="7A09"/>
<dbReference type="PDBsum" id="7D43"/>
<dbReference type="PDBsum" id="7D44"/>
<dbReference type="PDBsum" id="7D45"/>
<dbReference type="PDBsum" id="7F66"/>
<dbReference type="PDBsum" id="7F67"/>
<dbReference type="PDBsum" id="7NZM"/>
<dbReference type="PDBsum" id="7QP6"/>
<dbReference type="PDBsum" id="7QP7"/>
<dbReference type="PDBsum" id="7SYR"/>
<dbReference type="PDBsum" id="7SYS"/>
<dbReference type="PDBsum" id="8OZ0"/>
<dbReference type="PDBsum" id="8PJ1"/>
<dbReference type="PDBsum" id="8PJ2"/>
<dbReference type="PDBsum" id="8PJ3"/>
<dbReference type="PDBsum" id="8PJ4"/>
<dbReference type="PDBsum" id="8PPL"/>
<dbReference type="PDBsum" id="8QZZ"/>
<dbReference type="BMRB" id="P05198"/>
<dbReference type="EMDB" id="EMD-0649"/>
<dbReference type="EMDB" id="EMD-0651"/>
<dbReference type="EMDB" id="EMD-0664"/>
<dbReference type="EMDB" id="EMD-10774"/>
<dbReference type="EMDB" id="EMD-11302"/>
<dbReference type="EMDB" id="EMD-11335"/>
<dbReference type="EMDB" id="EMD-11602"/>
<dbReference type="EMDB" id="EMD-12665"/>
<dbReference type="EMDB" id="EMD-14113"/>
<dbReference type="EMDB" id="EMD-14114"/>
<dbReference type="EMDB" id="EMD-17297"/>
<dbReference type="EMDB" id="EMD-17696"/>
<dbReference type="EMDB" id="EMD-17697"/>
<dbReference type="EMDB" id="EMD-17698"/>
<dbReference type="EMDB" id="EMD-17699"/>
<dbReference type="EMDB" id="EMD-17805"/>
<dbReference type="EMDB" id="EMD-25538"/>
<dbReference type="EMDB" id="EMD-25539"/>
<dbReference type="EMDB" id="EMD-30568"/>
<dbReference type="EMDB" id="EMD-30569"/>
<dbReference type="EMDB" id="EMD-30570"/>
<dbReference type="EMDB" id="EMD-31474"/>
<dbReference type="EMDB" id="EMD-31475"/>
<dbReference type="EMDB" id="EMD-9840"/>
<dbReference type="EMDB" id="EMD-9841"/>
<dbReference type="EMDB" id="EMD-9842"/>
<dbReference type="SMR" id="P05198"/>
<dbReference type="BioGRID" id="108285">
    <property type="interactions" value="277"/>
</dbReference>
<dbReference type="ComplexPortal" id="CPX-2716">
    <property type="entry name" value="Eukaryotic translation initiation factor 2 complex"/>
</dbReference>
<dbReference type="CORUM" id="P05198"/>
<dbReference type="DIP" id="DIP-39418N"/>
<dbReference type="FunCoup" id="P05198">
    <property type="interactions" value="2896"/>
</dbReference>
<dbReference type="IntAct" id="P05198">
    <property type="interactions" value="114"/>
</dbReference>
<dbReference type="MINT" id="P05198"/>
<dbReference type="STRING" id="9606.ENSP00000256383"/>
<dbReference type="BindingDB" id="P05198"/>
<dbReference type="ChEMBL" id="CHEMBL1255131"/>
<dbReference type="GlyCosmos" id="P05198">
    <property type="glycosylation" value="4 sites, 1 glycan"/>
</dbReference>
<dbReference type="GlyGen" id="P05198">
    <property type="glycosylation" value="5 sites, 1 O-linked glycan (4 sites)"/>
</dbReference>
<dbReference type="iPTMnet" id="P05198"/>
<dbReference type="MetOSite" id="P05198"/>
<dbReference type="PhosphoSitePlus" id="P05198"/>
<dbReference type="SwissPalm" id="P05198"/>
<dbReference type="BioMuta" id="EIF2S1"/>
<dbReference type="DMDM" id="124200"/>
<dbReference type="OGP" id="P05198"/>
<dbReference type="REPRODUCTION-2DPAGE" id="IPI00219678"/>
<dbReference type="jPOST" id="P05198"/>
<dbReference type="MassIVE" id="P05198"/>
<dbReference type="PaxDb" id="9606-ENSP00000256383"/>
<dbReference type="PeptideAtlas" id="P05198"/>
<dbReference type="ProteomicsDB" id="51824"/>
<dbReference type="Pumba" id="P05198"/>
<dbReference type="TopDownProteomics" id="P05198"/>
<dbReference type="Antibodypedia" id="3181">
    <property type="antibodies" value="923 antibodies from 39 providers"/>
</dbReference>
<dbReference type="DNASU" id="1965"/>
<dbReference type="Ensembl" id="ENST00000256383.11">
    <property type="protein sequence ID" value="ENSP00000256383.4"/>
    <property type="gene ID" value="ENSG00000134001.15"/>
</dbReference>
<dbReference type="Ensembl" id="ENST00000466499.6">
    <property type="protein sequence ID" value="ENSP00000425299.1"/>
    <property type="gene ID" value="ENSG00000134001.15"/>
</dbReference>
<dbReference type="GeneID" id="1965"/>
<dbReference type="KEGG" id="hsa:1965"/>
<dbReference type="MANE-Select" id="ENST00000256383.11">
    <property type="protein sequence ID" value="ENSP00000256383.4"/>
    <property type="RefSeq nucleotide sequence ID" value="NM_004094.5"/>
    <property type="RefSeq protein sequence ID" value="NP_004085.1"/>
</dbReference>
<dbReference type="AGR" id="HGNC:3265"/>
<dbReference type="CTD" id="1965"/>
<dbReference type="DisGeNET" id="1965"/>
<dbReference type="GeneCards" id="EIF2S1"/>
<dbReference type="HGNC" id="HGNC:3265">
    <property type="gene designation" value="EIF2S1"/>
</dbReference>
<dbReference type="HPA" id="ENSG00000134001">
    <property type="expression patterns" value="Low tissue specificity"/>
</dbReference>
<dbReference type="MIM" id="603907">
    <property type="type" value="gene"/>
</dbReference>
<dbReference type="neXtProt" id="NX_P05198"/>
<dbReference type="OpenTargets" id="ENSG00000134001"/>
<dbReference type="PharmGKB" id="PA27695"/>
<dbReference type="VEuPathDB" id="HostDB:ENSG00000134001"/>
<dbReference type="eggNOG" id="KOG2916">
    <property type="taxonomic scope" value="Eukaryota"/>
</dbReference>
<dbReference type="GeneTree" id="ENSGT00390000007015"/>
<dbReference type="InParanoid" id="P05198"/>
<dbReference type="OMA" id="DVNEHQR"/>
<dbReference type="OrthoDB" id="1685042at2759"/>
<dbReference type="PAN-GO" id="P05198">
    <property type="GO annotations" value="6 GO annotations based on evolutionary models"/>
</dbReference>
<dbReference type="PhylomeDB" id="P05198"/>
<dbReference type="TreeFam" id="TF101502"/>
<dbReference type="BRENDA" id="3.6.5.3">
    <property type="organism ID" value="2681"/>
</dbReference>
<dbReference type="PathwayCommons" id="P05198"/>
<dbReference type="Reactome" id="R-HSA-156827">
    <property type="pathway name" value="L13a-mediated translational silencing of Ceruloplasmin expression"/>
</dbReference>
<dbReference type="Reactome" id="R-HSA-381042">
    <property type="pathway name" value="PERK regulates gene expression"/>
</dbReference>
<dbReference type="Reactome" id="R-HSA-382556">
    <property type="pathway name" value="ABC-family proteins mediated transport"/>
</dbReference>
<dbReference type="Reactome" id="R-HSA-72649">
    <property type="pathway name" value="Translation initiation complex formation"/>
</dbReference>
<dbReference type="Reactome" id="R-HSA-72695">
    <property type="pathway name" value="Formation of the ternary complex, and subsequently, the 43S complex"/>
</dbReference>
<dbReference type="Reactome" id="R-HSA-72702">
    <property type="pathway name" value="Ribosomal scanning and start codon recognition"/>
</dbReference>
<dbReference type="Reactome" id="R-HSA-72706">
    <property type="pathway name" value="GTP hydrolysis and joining of the 60S ribosomal subunit"/>
</dbReference>
<dbReference type="Reactome" id="R-HSA-72731">
    <property type="pathway name" value="Recycling of eIF2:GDP"/>
</dbReference>
<dbReference type="Reactome" id="R-HSA-9633012">
    <property type="pathway name" value="Response of EIF2AK4 (GCN2) to amino acid deficiency"/>
</dbReference>
<dbReference type="Reactome" id="R-HSA-9648895">
    <property type="pathway name" value="Response of EIF2AK1 (HRI) to heme deficiency"/>
</dbReference>
<dbReference type="Reactome" id="R-HSA-9833482">
    <property type="pathway name" value="PKR-mediated signaling"/>
</dbReference>
<dbReference type="Reactome" id="R-HSA-9840373">
    <property type="pathway name" value="Cellular response to mitochondrial stress"/>
</dbReference>
<dbReference type="SignaLink" id="P05198"/>
<dbReference type="SIGNOR" id="P05198"/>
<dbReference type="BioGRID-ORCS" id="1965">
    <property type="hits" value="826 hits in 1137 CRISPR screens"/>
</dbReference>
<dbReference type="CD-CODE" id="91857CE7">
    <property type="entry name" value="Nucleolus"/>
</dbReference>
<dbReference type="CD-CODE" id="DEE660B4">
    <property type="entry name" value="Stress granule"/>
</dbReference>
<dbReference type="CD-CODE" id="FB4E32DD">
    <property type="entry name" value="Presynaptic clusters and postsynaptic densities"/>
</dbReference>
<dbReference type="EvolutionaryTrace" id="P05198"/>
<dbReference type="GeneWiki" id="EIF2S1"/>
<dbReference type="GenomeRNAi" id="1965"/>
<dbReference type="Pharos" id="P05198">
    <property type="development level" value="Tchem"/>
</dbReference>
<dbReference type="PRO" id="PR:P05198"/>
<dbReference type="Proteomes" id="UP000005640">
    <property type="component" value="Chromosome 14"/>
</dbReference>
<dbReference type="RNAct" id="P05198">
    <property type="molecule type" value="protein"/>
</dbReference>
<dbReference type="Bgee" id="ENSG00000134001">
    <property type="expression patterns" value="Expressed in islet of Langerhans and 214 other cell types or tissues"/>
</dbReference>
<dbReference type="ExpressionAtlas" id="P05198">
    <property type="expression patterns" value="baseline and differential"/>
</dbReference>
<dbReference type="GO" id="GO:0010494">
    <property type="term" value="C:cytoplasmic stress granule"/>
    <property type="evidence" value="ECO:0000250"/>
    <property type="project" value="UniProtKB"/>
</dbReference>
<dbReference type="GO" id="GO:0005829">
    <property type="term" value="C:cytosol"/>
    <property type="evidence" value="ECO:0000314"/>
    <property type="project" value="HPA"/>
</dbReference>
<dbReference type="GO" id="GO:0033290">
    <property type="term" value="C:eukaryotic 48S preinitiation complex"/>
    <property type="evidence" value="ECO:0000318"/>
    <property type="project" value="GO_Central"/>
</dbReference>
<dbReference type="GO" id="GO:0005850">
    <property type="term" value="C:eukaryotic translation initiation factor 2 complex"/>
    <property type="evidence" value="ECO:0000314"/>
    <property type="project" value="UniProtKB"/>
</dbReference>
<dbReference type="GO" id="GO:0070062">
    <property type="term" value="C:extracellular exosome"/>
    <property type="evidence" value="ECO:0007005"/>
    <property type="project" value="UniProtKB"/>
</dbReference>
<dbReference type="GO" id="GO:0097451">
    <property type="term" value="C:glial limiting end-foot"/>
    <property type="evidence" value="ECO:0007669"/>
    <property type="project" value="Ensembl"/>
</dbReference>
<dbReference type="GO" id="GO:0016020">
    <property type="term" value="C:membrane"/>
    <property type="evidence" value="ECO:0007005"/>
    <property type="project" value="UniProtKB"/>
</dbReference>
<dbReference type="GO" id="GO:0005739">
    <property type="term" value="C:mitochondrion"/>
    <property type="evidence" value="ECO:0000314"/>
    <property type="project" value="UniProtKB"/>
</dbReference>
<dbReference type="GO" id="GO:0005634">
    <property type="term" value="C:nucleus"/>
    <property type="evidence" value="ECO:0007669"/>
    <property type="project" value="Ensembl"/>
</dbReference>
<dbReference type="GO" id="GO:0045202">
    <property type="term" value="C:synapse"/>
    <property type="evidence" value="ECO:0007669"/>
    <property type="project" value="Ensembl"/>
</dbReference>
<dbReference type="GO" id="GO:0044207">
    <property type="term" value="C:translation initiation ternary complex"/>
    <property type="evidence" value="ECO:0007669"/>
    <property type="project" value="Ensembl"/>
</dbReference>
<dbReference type="GO" id="GO:0043022">
    <property type="term" value="F:ribosome binding"/>
    <property type="evidence" value="ECO:0000314"/>
    <property type="project" value="UniProtKB"/>
</dbReference>
<dbReference type="GO" id="GO:0003723">
    <property type="term" value="F:RNA binding"/>
    <property type="evidence" value="ECO:0007005"/>
    <property type="project" value="UniProtKB"/>
</dbReference>
<dbReference type="GO" id="GO:0003743">
    <property type="term" value="F:translation initiation factor activity"/>
    <property type="evidence" value="ECO:0000314"/>
    <property type="project" value="UniProtKB"/>
</dbReference>
<dbReference type="GO" id="GO:0034198">
    <property type="term" value="P:cellular response to amino acid starvation"/>
    <property type="evidence" value="ECO:0000250"/>
    <property type="project" value="UniProtKB"/>
</dbReference>
<dbReference type="GO" id="GO:0034605">
    <property type="term" value="P:cellular response to heat"/>
    <property type="evidence" value="ECO:0007669"/>
    <property type="project" value="Ensembl"/>
</dbReference>
<dbReference type="GO" id="GO:0034599">
    <property type="term" value="P:cellular response to oxidative stress"/>
    <property type="evidence" value="ECO:0000250"/>
    <property type="project" value="ARUK-UCL"/>
</dbReference>
<dbReference type="GO" id="GO:0034644">
    <property type="term" value="P:cellular response to UV"/>
    <property type="evidence" value="ECO:0000250"/>
    <property type="project" value="UniProtKB"/>
</dbReference>
<dbReference type="GO" id="GO:0140468">
    <property type="term" value="P:HRI-mediated signaling"/>
    <property type="evidence" value="ECO:0000314"/>
    <property type="project" value="UniProtKB"/>
</dbReference>
<dbReference type="GO" id="GO:0000423">
    <property type="term" value="P:mitophagy"/>
    <property type="evidence" value="ECO:0000314"/>
    <property type="project" value="UniProtKB"/>
</dbReference>
<dbReference type="GO" id="GO:0032057">
    <property type="term" value="P:negative regulation of translational initiation in response to stress"/>
    <property type="evidence" value="ECO:0000250"/>
    <property type="project" value="UniProtKB"/>
</dbReference>
<dbReference type="GO" id="GO:0036499">
    <property type="term" value="P:PERK-mediated unfolded protein response"/>
    <property type="evidence" value="ECO:0000314"/>
    <property type="project" value="UniProtKB"/>
</dbReference>
<dbReference type="GO" id="GO:2000676">
    <property type="term" value="P:positive regulation of type B pancreatic cell apoptotic process"/>
    <property type="evidence" value="ECO:0007669"/>
    <property type="project" value="Ensembl"/>
</dbReference>
<dbReference type="GO" id="GO:0036490">
    <property type="term" value="P:regulation of translation in response to endoplasmic reticulum stress"/>
    <property type="evidence" value="ECO:0000315"/>
    <property type="project" value="ParkinsonsUK-UCL"/>
</dbReference>
<dbReference type="GO" id="GO:0043558">
    <property type="term" value="P:regulation of translational initiation in response to stress"/>
    <property type="evidence" value="ECO:0007669"/>
    <property type="project" value="Ensembl"/>
</dbReference>
<dbReference type="GO" id="GO:0034976">
    <property type="term" value="P:response to endoplasmic reticulum stress"/>
    <property type="evidence" value="ECO:0000314"/>
    <property type="project" value="UniProtKB"/>
</dbReference>
<dbReference type="GO" id="GO:1904373">
    <property type="term" value="P:response to kainic acid"/>
    <property type="evidence" value="ECO:0007669"/>
    <property type="project" value="Ensembl"/>
</dbReference>
<dbReference type="GO" id="GO:1990737">
    <property type="term" value="P:response to manganese-induced endoplasmic reticulum stress"/>
    <property type="evidence" value="ECO:0007669"/>
    <property type="project" value="Ensembl"/>
</dbReference>
<dbReference type="GO" id="GO:0034063">
    <property type="term" value="P:stress granule assembly"/>
    <property type="evidence" value="ECO:0000250"/>
    <property type="project" value="ARUK-UCL"/>
</dbReference>
<dbReference type="GO" id="GO:0006413">
    <property type="term" value="P:translational initiation"/>
    <property type="evidence" value="ECO:0000314"/>
    <property type="project" value="UniProt"/>
</dbReference>
<dbReference type="CDD" id="cd04452">
    <property type="entry name" value="S1_IF2_alpha"/>
    <property type="match status" value="1"/>
</dbReference>
<dbReference type="FunFam" id="1.10.150.190:FF:000001">
    <property type="entry name" value="Eukaryotic translation initiation factor 2 subunit 1"/>
    <property type="match status" value="1"/>
</dbReference>
<dbReference type="FunFam" id="2.40.50.140:FF:000795">
    <property type="entry name" value="Eukaryotic translation initiation factor 2 subunit 1"/>
    <property type="match status" value="1"/>
</dbReference>
<dbReference type="FunFam" id="3.30.70.1130:FF:000001">
    <property type="entry name" value="Eukaryotic translation initiation factor 2 subunit 1"/>
    <property type="match status" value="1"/>
</dbReference>
<dbReference type="Gene3D" id="3.30.70.1130">
    <property type="entry name" value="EIF_2_alpha"/>
    <property type="match status" value="1"/>
</dbReference>
<dbReference type="Gene3D" id="2.40.50.140">
    <property type="entry name" value="Nucleic acid-binding proteins"/>
    <property type="match status" value="1"/>
</dbReference>
<dbReference type="Gene3D" id="1.10.150.190">
    <property type="entry name" value="Translation initiation factor 2, subunit 1, domain 2"/>
    <property type="match status" value="1"/>
</dbReference>
<dbReference type="IDEAL" id="IID00508"/>
<dbReference type="InterPro" id="IPR012340">
    <property type="entry name" value="NA-bd_OB-fold"/>
</dbReference>
<dbReference type="InterPro" id="IPR003029">
    <property type="entry name" value="S1_domain"/>
</dbReference>
<dbReference type="InterPro" id="IPR044126">
    <property type="entry name" value="S1_IF2_alpha"/>
</dbReference>
<dbReference type="InterPro" id="IPR024055">
    <property type="entry name" value="TIF2_asu_C"/>
</dbReference>
<dbReference type="InterPro" id="IPR024054">
    <property type="entry name" value="TIF2_asu_middle_sf"/>
</dbReference>
<dbReference type="InterPro" id="IPR011488">
    <property type="entry name" value="TIF_2_asu"/>
</dbReference>
<dbReference type="PANTHER" id="PTHR10602">
    <property type="entry name" value="EUKARYOTIC TRANSLATION INITIATION FACTOR 2 SUBUNIT 1"/>
    <property type="match status" value="1"/>
</dbReference>
<dbReference type="PANTHER" id="PTHR10602:SF0">
    <property type="entry name" value="EUKARYOTIC TRANSLATION INITIATION FACTOR 2 SUBUNIT 1"/>
    <property type="match status" value="1"/>
</dbReference>
<dbReference type="Pfam" id="PF07541">
    <property type="entry name" value="EIF_2_alpha"/>
    <property type="match status" value="1"/>
</dbReference>
<dbReference type="Pfam" id="PF00575">
    <property type="entry name" value="S1"/>
    <property type="match status" value="1"/>
</dbReference>
<dbReference type="SMART" id="SM00316">
    <property type="entry name" value="S1"/>
    <property type="match status" value="1"/>
</dbReference>
<dbReference type="SUPFAM" id="SSF110993">
    <property type="entry name" value="eIF-2-alpha, C-terminal domain"/>
    <property type="match status" value="1"/>
</dbReference>
<dbReference type="SUPFAM" id="SSF116742">
    <property type="entry name" value="eIF2alpha middle domain-like"/>
    <property type="match status" value="1"/>
</dbReference>
<dbReference type="SUPFAM" id="SSF50249">
    <property type="entry name" value="Nucleic acid-binding proteins"/>
    <property type="match status" value="1"/>
</dbReference>
<dbReference type="PROSITE" id="PS50126">
    <property type="entry name" value="S1"/>
    <property type="match status" value="1"/>
</dbReference>
<gene>
    <name evidence="22" type="primary">EIF2S1</name>
    <name type="synonym">EIF2A</name>
</gene>
<sequence length="315" mass="36112">MPGLSCRFYQHKFPEVEDVVMVNVRSIAEMGAYVSLLEYNNIEGMILLSELSRRRIRSINKLIRIGRNECVVVIRVDKEKGYIDLSKRRVSPEEAIKCEDKFTKSKTVYSILRHVAEVLEYTKDEQLESLFQRTAWVFDDKYKRPGYGAYDAFKHAVSDPSILDSLDLNEDEREVLINNINRRLTPQAVKIRADIEVACYGYEGIDAVKEALRAGLNCSTENMPIKINLIAPPRYVMTTTTLERTEGLSVLSQAMAVIKEKIEEKRGVFNVQMEPKVVTDTDETELARQMERLERENAEVDGDDDAEEMEAKAED</sequence>
<name>IF2A_HUMAN</name>
<proteinExistence type="evidence at protein level"/>
<organism>
    <name type="scientific">Homo sapiens</name>
    <name type="common">Human</name>
    <dbReference type="NCBI Taxonomy" id="9606"/>
    <lineage>
        <taxon>Eukaryota</taxon>
        <taxon>Metazoa</taxon>
        <taxon>Chordata</taxon>
        <taxon>Craniata</taxon>
        <taxon>Vertebrata</taxon>
        <taxon>Euteleostomi</taxon>
        <taxon>Mammalia</taxon>
        <taxon>Eutheria</taxon>
        <taxon>Euarchontoglires</taxon>
        <taxon>Primates</taxon>
        <taxon>Haplorrhini</taxon>
        <taxon>Catarrhini</taxon>
        <taxon>Hominidae</taxon>
        <taxon>Homo</taxon>
    </lineage>
</organism>
<comment type="function">
    <text evidence="9 13 18 20">Member of the eIF2 complex that functions in the early steps of protein synthesis by forming a ternary complex with GTP and initiator tRNA (PubMed:16289705, PubMed:38340717). This complex binds to a 40S ribosomal subunit, followed by mRNA binding to form a 43S pre-initiation complex (43S PIC) (PubMed:16289705). Junction of the 60S ribosomal subunit to form the 80S initiation complex is preceded by hydrolysis of the GTP bound to eIF2 and release of an eIF2-GDP binary complex (PubMed:16289705). In order for eIF2 to recycle and catalyze another round of initiation, the GDP bound to eIF2 must exchange with GTP by way of a reaction catalyzed by eIF2B (PubMed:16289705). EIF2S1/eIF2-alpha is a key component of the integrated stress response (ISR), required for adaptation to various stress: phosphorylation by metabolic-stress sensing protein kinases (EIF2AK1/HRI, EIF2AK2/PKR, EIF2AK3/PERK and EIF2AK4/GCN2) in response to stress converts EIF2S1/eIF2-alpha in a global protein synthesis inhibitor, leading to an attenuation of cap-dependent translation, while concomitantly initiating the preferential translation of ISR-specific mRNAs, such as the transcriptional activators ATF4 and QRICH1, and hence allowing ATF4- and QRICH1-mediated reprogramming (PubMed:19131336, PubMed:33384352, PubMed:38340717). EIF2S1/eIF2-alpha also acts as an activator of mitophagy in response to mitochondrial damage: phosphorylation by EIF2AK1/HRI promotes relocalization to the mitochondrial surface, thereby triggering PRKN-independent mitophagy (PubMed:38340717).</text>
</comment>
<comment type="activity regulation">
    <text evidence="8 11 13">Activity is regulated by phosphorylation at Ser-49 and Ser-52, which stabilizes the eIF2/GDP/eIF2B complex and prevents the eIF2B-mediated exchange of GDP for GTP, thereby preventing the formation of the 43S pre-initiation complex (43S PIC) (PubMed:15207627, PubMed:18032499). This results in the global attenuation of 5' cap-dependent protein synthesis and concomitant translation of ISR-specific mRNAs that contain a short upstream open reading frame (uORF) in their 5' UTR, such as ATF4, ATF5, DDIT3/CHOP and PPP1R15A/GADD34 (PubMed:19131336).</text>
</comment>
<comment type="subunit">
    <text evidence="2 4 10 12 14 16 17 19">Eukaryotic translation initiation factor 2 eIF2 is a heterotrimeric complex composed of an alpha (EIF2S1), a beta (EIF2S2) and a gamma (EIF2S3) chain (PubMed:23063529, PubMed:31048492, PubMed:31836389, PubMed:35031321). eIF2 is member of the 43S pre-initiation complex (43S PIC). eIF2 forms a complex with at least CELF1/CUGBP1, CALR, CALR3, EIF2S1, EIF2S2, HSP90B1 and HSPA5 (By similarity). Interaction with METAP2 protects EIF2S1 from inhibitory phosphorylation (By similarity). Interacts with ABCF1 isoform 2 (PubMed:17894550). Associates with ribosomes (PubMed:17894550). Interacts with DDX3X in an RNA-independent manner (PubMed:18596238). Interacts with CDC123 (PubMed:31836389, PubMed:35031321).</text>
</comment>
<comment type="subunit">
    <text evidence="15">(Microbial infection) Interacts with rotavirus A non-structural protein 2; this interaction probably plays a role in the sequestration of IF2A in viral factories (PubMed:30258011). Interacts with rotavirus A non-structural protein 5; this interaction probably plays a role in its sequestration in viral factories (PubMed:30258011).</text>
</comment>
<comment type="interaction">
    <interactant intactId="EBI-1056162">
        <id>P05198</id>
    </interactant>
    <interactant intactId="EBI-351710">
        <id>P12814</id>
        <label>ACTN1</label>
    </interactant>
    <organismsDiffer>false</organismsDiffer>
    <experiments>3</experiments>
</comment>
<comment type="interaction">
    <interactant intactId="EBI-1056162">
        <id>P05198</id>
    </interactant>
    <interactant intactId="EBI-353779">
        <id>O00571</id>
        <label>DDX3X</label>
    </interactant>
    <organismsDiffer>false</organismsDiffer>
    <experiments>3</experiments>
</comment>
<comment type="interaction">
    <interactant intactId="EBI-1056162">
        <id>P05198</id>
    </interactant>
    <interactant intactId="EBI-640775">
        <id>P19525</id>
        <label>EIF2AK2</label>
    </interactant>
    <organismsDiffer>false</organismsDiffer>
    <experiments>5</experiments>
</comment>
<comment type="interaction">
    <interactant intactId="EBI-1056162">
        <id>P05198</id>
    </interactant>
    <interactant intactId="EBI-711977">
        <id>P20042</id>
        <label>EIF2S2</label>
    </interactant>
    <organismsDiffer>false</organismsDiffer>
    <experiments>8</experiments>
</comment>
<comment type="interaction">
    <interactant intactId="EBI-1056162">
        <id>P05198</id>
    </interactant>
    <interactant intactId="EBI-1054228">
        <id>P41091</id>
        <label>EIF2S3</label>
    </interactant>
    <organismsDiffer>false</organismsDiffer>
    <experiments>8</experiments>
</comment>
<comment type="interaction">
    <interactant intactId="EBI-1056162">
        <id>P05198</id>
    </interactant>
    <interactant intactId="EBI-357253">
        <id>P62136</id>
        <label>PPP1CA</label>
    </interactant>
    <organismsDiffer>false</organismsDiffer>
    <experiments>2</experiments>
</comment>
<comment type="interaction">
    <interactant intactId="EBI-1056162">
        <id>P05198</id>
    </interactant>
    <interactant intactId="EBI-3215577">
        <id>Q9NVM4</id>
        <label>PRMT7</label>
    </interactant>
    <organismsDiffer>false</organismsDiffer>
    <experiments>7</experiments>
</comment>
<comment type="interaction">
    <interactant intactId="EBI-1056162">
        <id>P05198</id>
    </interactant>
    <interactant intactId="EBI-2107455">
        <id>Q08AM6</id>
        <label>VAC14</label>
    </interactant>
    <organismsDiffer>false</organismsDiffer>
    <experiments>3</experiments>
</comment>
<comment type="interaction">
    <interactant intactId="EBI-1056162">
        <id>P05198</id>
    </interactant>
    <interactant intactId="EBI-1226344">
        <id>Q9Z2B5</id>
        <label>Eif2ak3</label>
    </interactant>
    <organismsDiffer>true</organismsDiffer>
    <experiments>4</experiments>
</comment>
<comment type="subcellular location">
    <subcellularLocation>
        <location evidence="4">Cytoplasm</location>
        <location evidence="4">Stress granule</location>
    </subcellularLocation>
    <subcellularLocation>
        <location evidence="1">Cytoplasm</location>
        <location evidence="1">Cytosol</location>
    </subcellularLocation>
    <subcellularLocation>
        <location evidence="20">Mitochondrion</location>
    </subcellularLocation>
    <text evidence="4 20">Colocalizes with NANOS3 in the stress granules (By similarity). Relocalizes to the surface of mitochondria in response to mitochondrial damage and phosphorylation by EIF2AK1/HRI (PubMed:38340717).</text>
</comment>
<comment type="induction">
    <text evidence="18">Up-regulated upon endoplasmic reticulum stress.</text>
</comment>
<comment type="PTM">
    <text evidence="4 7 8 11 13 16 20">Phosphorylation at Ser-49 and Ser-52 stabilizes the eIF-2/GDP/eIF2B complex and prevents GDP/GTP exchange reaction, thus impairing the recycling of eIF-2 between successive rounds of initiation and leading to global inhibition of translation, while concomitantly initiating the preferential translation of integrated stress response (ISR)-specific mRNAs (PubMed:10026192, PubMed:15207627, PubMed:18032499, PubMed:19131336, PubMed:31048492). Substrate for at least 4 kinases: EIF2AK1/HRI, EIF2AK2/PKR, EIF2AK3/PERK and EIF2AK4/GCN2 (PubMed:15489334, PubMed:38340717). Phosphorylation on Ser-52 by the EIF2AK4/GCN2 protein kinase occurs in response to amino acid starvation and UV irradiation (By similarity). Phosphorylation at Ser-52 by the EIF2AK3/PERK protein kinase occurs in response to the unfolded protein response (PubMed:10026192). Phosphorylation at Ser-52 by EIF2AK1/HRI in response to mitochondrial damage promotes relocalization to the mitochondrial surface (PubMed:38340717).</text>
</comment>
<comment type="PTM">
    <text evidence="8 11">(Microbial infection) Phosphorylation by vaccinia virus protein E3 and rotavirus A stabilizes the eIF-2/GDP/eIF2B complex and prevents GDP/GTP exchange reaction, thus impairing the recycling of eIF-2 between successive rounds of initiation and leading to global inhibition of translation.</text>
</comment>
<comment type="similarity">
    <text evidence="21">Belongs to the eIF-2-alpha family.</text>
</comment>
<comment type="caution">
    <text evidence="21">This gene should not be confused with EIF2A, with which it shares the alias EIF2A. Although both of these proteins function in binding initiator tRNA to the 40S ribosomal subunit, the eIF2 complex requires GTP, whereas the EIF2A protein does so in a codon-dependent manner.</text>
</comment>
<protein>
    <recommendedName>
        <fullName>Eukaryotic translation initiation factor 2 subunit 1</fullName>
    </recommendedName>
    <alternativeName>
        <fullName>Eukaryotic translation initiation factor 2 subunit alpha</fullName>
        <shortName>eIF-2-alpha</shortName>
        <shortName>eIF-2A</shortName>
        <shortName>eIF-2alpha</shortName>
        <shortName>eIF2-alpha</shortName>
    </alternativeName>
</protein>
<accession>P05198</accession>